<feature type="chain" id="PRO_0000088022" description="Type I restriction enzyme EcoKI methylase subunit">
    <location>
        <begin position="1"/>
        <end position="529"/>
    </location>
</feature>
<feature type="binding site" evidence="1">
    <location>
        <begin position="148"/>
        <end position="153"/>
    </location>
    <ligand>
        <name>S-adenosyl-L-methionine</name>
        <dbReference type="ChEBI" id="CHEBI:59789"/>
    </ligand>
</feature>
<feature type="binding site" evidence="1">
    <location>
        <begin position="178"/>
        <end position="180"/>
    </location>
    <ligand>
        <name>S-adenosyl-L-methionine</name>
        <dbReference type="ChEBI" id="CHEBI:59789"/>
    </ligand>
</feature>
<feature type="binding site" evidence="1">
    <location>
        <position position="216"/>
    </location>
    <ligand>
        <name>S-adenosyl-L-methionine</name>
        <dbReference type="ChEBI" id="CHEBI:59789"/>
    </ligand>
</feature>
<feature type="helix" evidence="15">
    <location>
        <begin position="5"/>
        <end position="18"/>
    </location>
</feature>
<feature type="turn" evidence="15">
    <location>
        <begin position="19"/>
        <end position="21"/>
    </location>
</feature>
<feature type="helix" evidence="15">
    <location>
        <begin position="27"/>
        <end position="43"/>
    </location>
</feature>
<feature type="helix" evidence="15">
    <location>
        <begin position="46"/>
        <end position="49"/>
    </location>
</feature>
<feature type="helix" evidence="15">
    <location>
        <begin position="56"/>
        <end position="60"/>
    </location>
</feature>
<feature type="helix" evidence="15">
    <location>
        <begin position="64"/>
        <end position="78"/>
    </location>
</feature>
<feature type="strand" evidence="15">
    <location>
        <begin position="80"/>
        <end position="82"/>
    </location>
</feature>
<feature type="helix" evidence="15">
    <location>
        <begin position="84"/>
        <end position="90"/>
    </location>
</feature>
<feature type="helix" evidence="15">
    <location>
        <begin position="100"/>
        <end position="111"/>
    </location>
</feature>
<feature type="helix" evidence="15">
    <location>
        <begin position="153"/>
        <end position="163"/>
    </location>
</feature>
<feature type="strand" evidence="15">
    <location>
        <begin position="171"/>
        <end position="173"/>
    </location>
</feature>
<feature type="turn" evidence="15">
    <location>
        <begin position="177"/>
        <end position="179"/>
    </location>
</feature>
<feature type="helix" evidence="15">
    <location>
        <begin position="180"/>
        <end position="190"/>
    </location>
</feature>
<feature type="turn" evidence="15">
    <location>
        <begin position="191"/>
        <end position="198"/>
    </location>
</feature>
<feature type="helix" evidence="15">
    <location>
        <begin position="201"/>
        <end position="209"/>
    </location>
</feature>
<feature type="strand" evidence="15">
    <location>
        <begin position="211"/>
        <end position="217"/>
    </location>
</feature>
<feature type="helix" evidence="15">
    <location>
        <begin position="219"/>
        <end position="230"/>
    </location>
</feature>
<feature type="turn" evidence="15">
    <location>
        <begin position="231"/>
        <end position="233"/>
    </location>
</feature>
<feature type="helix" evidence="15">
    <location>
        <begin position="238"/>
        <end position="240"/>
    </location>
</feature>
<feature type="strand" evidence="15">
    <location>
        <begin position="242"/>
        <end position="247"/>
    </location>
</feature>
<feature type="helix" evidence="15">
    <location>
        <begin position="252"/>
        <end position="255"/>
    </location>
</feature>
<feature type="strand" evidence="15">
    <location>
        <begin position="260"/>
        <end position="265"/>
    </location>
</feature>
<feature type="helix" evidence="15">
    <location>
        <begin position="288"/>
        <end position="299"/>
    </location>
</feature>
<feature type="strand" evidence="15">
    <location>
        <begin position="300"/>
        <end position="311"/>
    </location>
</feature>
<feature type="helix" evidence="15">
    <location>
        <begin position="312"/>
        <end position="316"/>
    </location>
</feature>
<feature type="helix" evidence="15">
    <location>
        <begin position="320"/>
        <end position="331"/>
    </location>
</feature>
<feature type="strand" evidence="15">
    <location>
        <begin position="332"/>
        <end position="339"/>
    </location>
</feature>
<feature type="strand" evidence="15">
    <location>
        <begin position="345"/>
        <end position="347"/>
    </location>
</feature>
<feature type="strand" evidence="15">
    <location>
        <begin position="352"/>
        <end position="360"/>
    </location>
</feature>
<feature type="strand" evidence="15">
    <location>
        <begin position="374"/>
        <end position="379"/>
    </location>
</feature>
<feature type="strand" evidence="15">
    <location>
        <begin position="388"/>
        <end position="391"/>
    </location>
</feature>
<feature type="helix" evidence="15">
    <location>
        <begin position="395"/>
        <end position="397"/>
    </location>
</feature>
<feature type="helix" evidence="15">
    <location>
        <begin position="399"/>
        <end position="405"/>
    </location>
</feature>
<feature type="strand" evidence="15">
    <location>
        <begin position="427"/>
        <end position="429"/>
    </location>
</feature>
<feature type="helix" evidence="15">
    <location>
        <begin position="433"/>
        <end position="435"/>
    </location>
</feature>
<feature type="helix" evidence="15">
    <location>
        <begin position="442"/>
        <end position="444"/>
    </location>
</feature>
<feature type="strand" evidence="15">
    <location>
        <begin position="446"/>
        <end position="451"/>
    </location>
</feature>
<feature type="helix" evidence="15">
    <location>
        <begin position="452"/>
        <end position="457"/>
    </location>
</feature>
<feature type="strand" evidence="15">
    <location>
        <begin position="459"/>
        <end position="461"/>
    </location>
</feature>
<feature type="helix" evidence="15">
    <location>
        <begin position="482"/>
        <end position="505"/>
    </location>
</feature>
<feature type="helix" evidence="15">
    <location>
        <begin position="511"/>
        <end position="521"/>
    </location>
</feature>
<sequence length="529" mass="59307">MNNNDLVAKLWKLCDNLRDGGVSYQNYVNELASLLFLKMCKETGQEAEYLPEGYRWDDLKSRIGQEQLQFYRKMLVHLGEDDKKLVQAVFHNVSTTITEPKQITALVSNMDSLDWYNGAHGKSRDDFGDMYEGLLQKNANETKSGAGQYFTPRPLIKTIIHLLKPQPREVVQDPAAGTAGFLIEADRYVKSQTNDLDDLDGDTQDFQIHRAFIGLELVPGTRRLALMNCLLHDIEGNLDHGGAIRLGNTLGSDGENLPKAHIVATNPPFGSAAGTNITRTFVHPTSNKQLCFMQHIIETLHPGGRAAVVVPDNVLFEGGKGTDIRRDLMDKCHLHTILRLPTGIFYAQGVKTNVLFFTKGTVANPNQDKNCTDDVWVYDLRTNMPSFGKRTPFTDEHLQPFERVYGEDPHGLSPRTEGEWSFNAEETEVADSEENKNTDQHLATSRWRKFSREWIRTAKSDSLDISWLKDKDSIDADSLPEPDVLAAEAMGELVQALSELDALMRELGASDEADLQRQLLEEAFGGVKE</sequence>
<dbReference type="EC" id="2.1.1.72" evidence="6"/>
<dbReference type="EMBL" id="X06545">
    <property type="protein sequence ID" value="CAA29792.1"/>
    <property type="molecule type" value="Genomic_DNA"/>
</dbReference>
<dbReference type="EMBL" id="U14003">
    <property type="protein sequence ID" value="AAA97246.1"/>
    <property type="molecule type" value="Genomic_DNA"/>
</dbReference>
<dbReference type="EMBL" id="U00096">
    <property type="protein sequence ID" value="AAC77305.1"/>
    <property type="molecule type" value="Genomic_DNA"/>
</dbReference>
<dbReference type="EMBL" id="AP009048">
    <property type="protein sequence ID" value="BAE78339.1"/>
    <property type="molecule type" value="Genomic_DNA"/>
</dbReference>
<dbReference type="PIR" id="B30375">
    <property type="entry name" value="XYECHM"/>
</dbReference>
<dbReference type="RefSeq" id="NP_418769.1">
    <property type="nucleotide sequence ID" value="NC_000913.3"/>
</dbReference>
<dbReference type="RefSeq" id="WP_001063204.1">
    <property type="nucleotide sequence ID" value="NZ_LN832404.1"/>
</dbReference>
<dbReference type="PDB" id="2AR0">
    <property type="method" value="X-ray"/>
    <property type="resolution" value="2.80 A"/>
    <property type="chains" value="A/B=2-527"/>
</dbReference>
<dbReference type="PDB" id="2Y7C">
    <property type="method" value="EM"/>
    <property type="resolution" value="18.00 A"/>
    <property type="chains" value="B/C=1-529"/>
</dbReference>
<dbReference type="PDB" id="2Y7H">
    <property type="method" value="EM"/>
    <property type="resolution" value="18.00 A"/>
    <property type="chains" value="B/C=1-529"/>
</dbReference>
<dbReference type="PDBsum" id="2AR0"/>
<dbReference type="PDBsum" id="2Y7C"/>
<dbReference type="PDBsum" id="2Y7H"/>
<dbReference type="SMR" id="P08957"/>
<dbReference type="BioGRID" id="4262768">
    <property type="interactions" value="113"/>
</dbReference>
<dbReference type="ComplexPortal" id="CPX-5628">
    <property type="entry name" value="Type I restriction-modification EcoKI complex"/>
</dbReference>
<dbReference type="DIP" id="DIP-9943N"/>
<dbReference type="FunCoup" id="P08957">
    <property type="interactions" value="350"/>
</dbReference>
<dbReference type="IntAct" id="P08957">
    <property type="interactions" value="15"/>
</dbReference>
<dbReference type="STRING" id="511145.b4349"/>
<dbReference type="REBASE" id="13379">
    <property type="entry name" value="M.EcoW3110ORF4339P"/>
</dbReference>
<dbReference type="REBASE" id="152630">
    <property type="entry name" value="M1.Ret561ORF1035P"/>
</dbReference>
<dbReference type="REBASE" id="152641">
    <property type="entry name" value="M.Rsp1341ORF1035P"/>
</dbReference>
<dbReference type="REBASE" id="152653">
    <property type="entry name" value="M.Rsp113ORF1037P"/>
</dbReference>
<dbReference type="REBASE" id="152691">
    <property type="entry name" value="M.Rph931ORF1047P"/>
</dbReference>
<dbReference type="REBASE" id="152704">
    <property type="entry name" value="M.Rph831ORF1044P"/>
</dbReference>
<dbReference type="REBASE" id="152714">
    <property type="entry name" value="M.Rsp741ORF1035P"/>
</dbReference>
<dbReference type="REBASE" id="152736">
    <property type="entry name" value="M.Rsp871ORF1035P"/>
</dbReference>
<dbReference type="REBASE" id="156146">
    <property type="entry name" value="M.BamRD77ORF2498P"/>
</dbReference>
<dbReference type="REBASE" id="204159">
    <property type="entry name" value="M.Bli1441ORF2992P"/>
</dbReference>
<dbReference type="REBASE" id="204719">
    <property type="entry name" value="M.Bsu333ORF2986P"/>
</dbReference>
<dbReference type="REBASE" id="205029">
    <property type="entry name" value="M.Bve72ORF2738P"/>
</dbReference>
<dbReference type="REBASE" id="205122">
    <property type="entry name" value="M.Bve1413ORF3003P"/>
</dbReference>
<dbReference type="REBASE" id="3387">
    <property type="entry name" value="M.EcoKI"/>
</dbReference>
<dbReference type="REBASE" id="441884">
    <property type="entry name" value="M.EcoBL21FORF4361P"/>
</dbReference>
<dbReference type="jPOST" id="P08957"/>
<dbReference type="PaxDb" id="511145-b4349"/>
<dbReference type="EnsemblBacteria" id="AAC77305">
    <property type="protein sequence ID" value="AAC77305"/>
    <property type="gene ID" value="b4349"/>
</dbReference>
<dbReference type="GeneID" id="948872"/>
<dbReference type="KEGG" id="ecj:JW4312"/>
<dbReference type="KEGG" id="eco:b4349"/>
<dbReference type="KEGG" id="ecoc:C3026_23495"/>
<dbReference type="PATRIC" id="fig|1411691.4.peg.2337"/>
<dbReference type="EchoBASE" id="EB0453"/>
<dbReference type="eggNOG" id="COG0286">
    <property type="taxonomic scope" value="Bacteria"/>
</dbReference>
<dbReference type="HOGENOM" id="CLU_018284_2_0_6"/>
<dbReference type="InParanoid" id="P08957"/>
<dbReference type="OMA" id="GTFGFMI"/>
<dbReference type="OrthoDB" id="9784823at2"/>
<dbReference type="PhylomeDB" id="P08957"/>
<dbReference type="BioCyc" id="EcoCyc:EG10458-MONOMER"/>
<dbReference type="BioCyc" id="MetaCyc:EG10458-MONOMER"/>
<dbReference type="BRENDA" id="3.1.21.3">
    <property type="organism ID" value="2165"/>
</dbReference>
<dbReference type="EvolutionaryTrace" id="P08957"/>
<dbReference type="PRO" id="PR:P08957"/>
<dbReference type="Proteomes" id="UP000000625">
    <property type="component" value="Chromosome"/>
</dbReference>
<dbReference type="GO" id="GO:0005829">
    <property type="term" value="C:cytosol"/>
    <property type="evidence" value="ECO:0000314"/>
    <property type="project" value="EcoCyc"/>
</dbReference>
<dbReference type="GO" id="GO:0019812">
    <property type="term" value="C:type I site-specific deoxyribonuclease complex"/>
    <property type="evidence" value="ECO:0000353"/>
    <property type="project" value="ComplexPortal"/>
</dbReference>
<dbReference type="GO" id="GO:0003677">
    <property type="term" value="F:DNA binding"/>
    <property type="evidence" value="ECO:0007669"/>
    <property type="project" value="UniProtKB-KW"/>
</dbReference>
<dbReference type="GO" id="GO:0008170">
    <property type="term" value="F:N-methyltransferase activity"/>
    <property type="evidence" value="ECO:0000315"/>
    <property type="project" value="EcoliWiki"/>
</dbReference>
<dbReference type="GO" id="GO:0009007">
    <property type="term" value="F:site-specific DNA-methyltransferase (adenine-specific) activity"/>
    <property type="evidence" value="ECO:0007669"/>
    <property type="project" value="UniProtKB-EC"/>
</dbReference>
<dbReference type="GO" id="GO:0009307">
    <property type="term" value="P:DNA restriction-modification system"/>
    <property type="evidence" value="ECO:0000314"/>
    <property type="project" value="ComplexPortal"/>
</dbReference>
<dbReference type="GO" id="GO:0032259">
    <property type="term" value="P:methylation"/>
    <property type="evidence" value="ECO:0007669"/>
    <property type="project" value="UniProtKB-KW"/>
</dbReference>
<dbReference type="FunFam" id="3.40.50.150:FF:000284">
    <property type="entry name" value="Type I restriction enzyme StySJI M protein"/>
    <property type="match status" value="1"/>
</dbReference>
<dbReference type="Gene3D" id="1.20.1260.30">
    <property type="match status" value="1"/>
</dbReference>
<dbReference type="Gene3D" id="3.40.50.150">
    <property type="entry name" value="Vaccinia Virus protein VP39"/>
    <property type="match status" value="1"/>
</dbReference>
<dbReference type="InterPro" id="IPR022749">
    <property type="entry name" value="D12N6_MeTrfase_N"/>
</dbReference>
<dbReference type="InterPro" id="IPR051537">
    <property type="entry name" value="DNA_Adenine_Mtase"/>
</dbReference>
<dbReference type="InterPro" id="IPR003356">
    <property type="entry name" value="DNA_methylase_A-5"/>
</dbReference>
<dbReference type="InterPro" id="IPR002052">
    <property type="entry name" value="DNA_methylase_N6_adenine_CS"/>
</dbReference>
<dbReference type="InterPro" id="IPR029063">
    <property type="entry name" value="SAM-dependent_MTases_sf"/>
</dbReference>
<dbReference type="InterPro" id="IPR038333">
    <property type="entry name" value="T1MK-like_N_sf"/>
</dbReference>
<dbReference type="PANTHER" id="PTHR42933">
    <property type="entry name" value="SLR6095 PROTEIN"/>
    <property type="match status" value="1"/>
</dbReference>
<dbReference type="PANTHER" id="PTHR42933:SF4">
    <property type="entry name" value="TYPE I RESTRICTION ENZYME ECOKI METHYLASE SUBUNIT"/>
    <property type="match status" value="1"/>
</dbReference>
<dbReference type="Pfam" id="PF12161">
    <property type="entry name" value="HsdM_N"/>
    <property type="match status" value="1"/>
</dbReference>
<dbReference type="Pfam" id="PF02384">
    <property type="entry name" value="N6_Mtase"/>
    <property type="match status" value="1"/>
</dbReference>
<dbReference type="PRINTS" id="PR00507">
    <property type="entry name" value="N12N6MTFRASE"/>
</dbReference>
<dbReference type="SUPFAM" id="SSF53335">
    <property type="entry name" value="S-adenosyl-L-methionine-dependent methyltransferases"/>
    <property type="match status" value="1"/>
</dbReference>
<dbReference type="PROSITE" id="PS00092">
    <property type="entry name" value="N6_MTASE"/>
    <property type="match status" value="1"/>
</dbReference>
<comment type="function">
    <text evidence="4 5 6 7">The subtype gamma methyltransferase (M) subunit of a type I restriction enzyme. The M and S subunits together form a methyltransferase (MTase) that methylates A-2 on the top and A-3 on the bottom strand of the sequence 5'-AACN(6)GTGC-3'. In the presence of the R subunit the complex can also act as an endonuclease, binding to the same target sequence but cutting the DNA some distance from this site. Whether the DNA is cut or modified depends on the methylation state of the target sequence. When the target site is unmodified, the DNA is cut. When the target site is hemimethylated, the complex acts as a maintenance MTase modifying the DNA so that both strands become methylated. After locating a non-methylated recognition site, the enzyme complex serves as a molecular motor that translocates DNA in an ATP-dependent manner until a collision occurs that triggers cleavage.</text>
</comment>
<comment type="catalytic activity">
    <reaction evidence="6">
        <text>a 2'-deoxyadenosine in DNA + S-adenosyl-L-methionine = an N(6)-methyl-2'-deoxyadenosine in DNA + S-adenosyl-L-homocysteine + H(+)</text>
        <dbReference type="Rhea" id="RHEA:15197"/>
        <dbReference type="Rhea" id="RHEA-COMP:12418"/>
        <dbReference type="Rhea" id="RHEA-COMP:12419"/>
        <dbReference type="ChEBI" id="CHEBI:15378"/>
        <dbReference type="ChEBI" id="CHEBI:57856"/>
        <dbReference type="ChEBI" id="CHEBI:59789"/>
        <dbReference type="ChEBI" id="CHEBI:90615"/>
        <dbReference type="ChEBI" id="CHEBI:90616"/>
        <dbReference type="EC" id="2.1.1.72"/>
    </reaction>
</comment>
<comment type="subunit">
    <text evidence="3 5 6 7">The type I restriction/modification system is composed of three polypeptides R, M and S (PubMed:6255295). The restriction enzyme has stoichiometry R(2)M(2)S(1) (PubMed:9033396). The methyltransferase is composed of M(2)S(1) (PubMed:19074193, PubMed:8514761, PubMed:9033396).</text>
</comment>
<comment type="subunit">
    <text evidence="2 3">(Microbial infection) Interacts with Escherichia phage T7 protein Ocr; this interaction leads to the inhibition of the methyltransferase restriction enzyme M.EcoKI composed of M(2)S(1).</text>
</comment>
<comment type="interaction">
    <interactant intactId="EBI-878571">
        <id>P08957</id>
    </interactant>
    <interactant intactId="EBI-559403">
        <id>P12295</id>
        <label>ung</label>
    </interactant>
    <organismsDiffer>false</organismsDiffer>
    <experiments>3</experiments>
</comment>
<comment type="induction">
    <text evidence="5 11">Encoded in the hsd locus, in the order hsdR-hsdM-hsdS. There is a promoter upstream of hsdR and another between hsdR and hsdM (PubMed:6255295). This probably allows expression of the methylase enzyme before the restriction-specific subunit (Probable).</text>
</comment>
<comment type="miscellaneous">
    <text>Type I restriction and modification enzymes are complex, multifunctional systems which require ATP, S-adenosyl methionine and Mg(2+) as cofactors and, in addition to their endonucleolytic and methylase activities, are potent DNA-dependent ATPases.</text>
</comment>
<comment type="similarity">
    <text evidence="10">Belongs to the N(4)/N(6)-methyltransferase family.</text>
</comment>
<name>T1MK_ECOLI</name>
<evidence type="ECO:0000250" key="1">
    <source>
        <dbReference type="UniProtKB" id="Q89Z59"/>
    </source>
</evidence>
<evidence type="ECO:0000269" key="2">
    <source>
    </source>
</evidence>
<evidence type="ECO:0000269" key="3">
    <source>
    </source>
</evidence>
<evidence type="ECO:0000269" key="4">
    <source>
    </source>
</evidence>
<evidence type="ECO:0000269" key="5">
    <source>
    </source>
</evidence>
<evidence type="ECO:0000269" key="6">
    <source>
    </source>
</evidence>
<evidence type="ECO:0000269" key="7">
    <source>
    </source>
</evidence>
<evidence type="ECO:0000303" key="8">
    <source>
    </source>
</evidence>
<evidence type="ECO:0000303" key="9">
    <source>
    </source>
</evidence>
<evidence type="ECO:0000305" key="10"/>
<evidence type="ECO:0000305" key="11">
    <source>
    </source>
</evidence>
<evidence type="ECO:0007744" key="12">
    <source>
        <dbReference type="PDB" id="2AR0"/>
    </source>
</evidence>
<evidence type="ECO:0007744" key="13">
    <source>
        <dbReference type="PDB" id="2Y7C"/>
    </source>
</evidence>
<evidence type="ECO:0007744" key="14">
    <source>
        <dbReference type="PDB" id="2Y7H"/>
    </source>
</evidence>
<evidence type="ECO:0007829" key="15">
    <source>
        <dbReference type="PDB" id="2AR0"/>
    </source>
</evidence>
<protein>
    <recommendedName>
        <fullName evidence="10">Type I restriction enzyme EcoKI methylase subunit</fullName>
        <shortName>M protein</shortName>
        <ecNumber evidence="6">2.1.1.72</ecNumber>
    </recommendedName>
    <alternativeName>
        <fullName evidence="8">Type I methyltransferase M.EcoKI</fullName>
        <shortName evidence="8">M.EcoKI</shortName>
    </alternativeName>
</protein>
<reference key="1">
    <citation type="journal article" date="1987" name="J. Mol. Biol.">
        <title>Organization and sequence of the hsd genes of Escherichia coli K-12.</title>
        <authorList>
            <person name="Loenen W.A.M."/>
            <person name="Daniel A.S."/>
            <person name="Braymer H.D."/>
            <person name="Murray N.E."/>
        </authorList>
    </citation>
    <scope>NUCLEOTIDE SEQUENCE [GENOMIC DNA]</scope>
    <source>
        <strain>K12</strain>
    </source>
</reference>
<reference key="2">
    <citation type="journal article" date="1995" name="Nucleic Acids Res.">
        <title>Analysis of the Escherichia coli genome VI: DNA sequence of the region from 92.8 through 100 minutes.</title>
        <authorList>
            <person name="Burland V.D."/>
            <person name="Plunkett G. III"/>
            <person name="Sofia H.J."/>
            <person name="Daniels D.L."/>
            <person name="Blattner F.R."/>
        </authorList>
    </citation>
    <scope>NUCLEOTIDE SEQUENCE [LARGE SCALE GENOMIC DNA]</scope>
    <source>
        <strain>K12 / MG1655 / ATCC 47076</strain>
    </source>
</reference>
<reference key="3">
    <citation type="journal article" date="1997" name="Science">
        <title>The complete genome sequence of Escherichia coli K-12.</title>
        <authorList>
            <person name="Blattner F.R."/>
            <person name="Plunkett G. III"/>
            <person name="Bloch C.A."/>
            <person name="Perna N.T."/>
            <person name="Burland V."/>
            <person name="Riley M."/>
            <person name="Collado-Vides J."/>
            <person name="Glasner J.D."/>
            <person name="Rode C.K."/>
            <person name="Mayhew G.F."/>
            <person name="Gregor J."/>
            <person name="Davis N.W."/>
            <person name="Kirkpatrick H.A."/>
            <person name="Goeden M.A."/>
            <person name="Rose D.J."/>
            <person name="Mau B."/>
            <person name="Shao Y."/>
        </authorList>
    </citation>
    <scope>NUCLEOTIDE SEQUENCE [LARGE SCALE GENOMIC DNA]</scope>
    <source>
        <strain>K12 / MG1655 / ATCC 47076</strain>
    </source>
</reference>
<reference key="4">
    <citation type="journal article" date="2006" name="Mol. Syst. Biol.">
        <title>Highly accurate genome sequences of Escherichia coli K-12 strains MG1655 and W3110.</title>
        <authorList>
            <person name="Hayashi K."/>
            <person name="Morooka N."/>
            <person name="Yamamoto Y."/>
            <person name="Fujita K."/>
            <person name="Isono K."/>
            <person name="Choi S."/>
            <person name="Ohtsubo E."/>
            <person name="Baba T."/>
            <person name="Wanner B.L."/>
            <person name="Mori H."/>
            <person name="Horiuchi T."/>
        </authorList>
    </citation>
    <scope>NUCLEOTIDE SEQUENCE [LARGE SCALE GENOMIC DNA]</scope>
    <source>
        <strain>K12 / W3110 / ATCC 27325 / DSM 5911</strain>
    </source>
</reference>
<reference key="5">
    <citation type="journal article" date="1993" name="J. Biol. Chem.">
        <title>Purification and characterization of the methyltransferase from the type 1 restriction and modification system of Escherichia coli K12.</title>
        <authorList>
            <person name="Dryden D.T."/>
            <person name="Cooper L.P."/>
            <person name="Murray N.E."/>
        </authorList>
    </citation>
    <scope>PROTEIN SEQUENCE OF 1-5</scope>
    <scope>FUNCTION</scope>
    <scope>CATALYTIC ACTIVITY</scope>
    <scope>SUBUNIT</scope>
    <source>
        <strain>K12</strain>
    </source>
</reference>
<reference key="6">
    <citation type="journal article" date="1968" name="Nature">
        <title>DNA restriction enzyme from E. coli.</title>
        <authorList>
            <person name="Meselson M."/>
            <person name="Yuan R."/>
        </authorList>
    </citation>
    <scope>FUNCTION</scope>
    <source>
        <strain>K12</strain>
    </source>
</reference>
<reference key="7">
    <citation type="journal article" date="1980" name="Mol. Gen. Genet.">
        <title>The hsd (host specificity) genes of E. coli K 12.</title>
        <authorList>
            <person name="Sain B."/>
            <person name="Murray N.E."/>
        </authorList>
    </citation>
    <scope>FUNCTION</scope>
    <scope>SUBUNIT</scope>
    <scope>OPERON STRUCTURE</scope>
    <source>
        <strain>K12</strain>
    </source>
</reference>
<reference key="8">
    <citation type="journal article" date="1997" name="Biochemistry">
        <title>The in vitro assembly of the EcoKI type I DNA restriction/modification enzyme and its in vivo implications.</title>
        <authorList>
            <person name="Dryden D.T."/>
            <person name="Cooper L.P."/>
            <person name="Thorpe P.H."/>
            <person name="Byron O."/>
        </authorList>
    </citation>
    <scope>FUNCTION</scope>
    <scope>SUBUNIT</scope>
    <source>
        <strain>K12</strain>
    </source>
</reference>
<reference key="9">
    <citation type="journal article" date="1997" name="Electrophoresis">
        <title>Escherichia coli proteome analysis using the gene-protein database.</title>
        <authorList>
            <person name="VanBogelen R.A."/>
            <person name="Abshire K.Z."/>
            <person name="Moldover B."/>
            <person name="Olson E.R."/>
            <person name="Neidhardt F.C."/>
        </authorList>
    </citation>
    <scope>IDENTIFICATION BY 2D-GEL</scope>
</reference>
<reference key="10">
    <citation type="journal article" date="2002" name="Nucleic Acids Res.">
        <title>Interaction of the ocr gene 0.3 protein of bacteriophage T7 with EcoKI restriction/modification enzyme.</title>
        <authorList>
            <person name="Atanasiu C."/>
            <person name="Su T.J."/>
            <person name="Sturrock S.S."/>
            <person name="Dryden D.T."/>
        </authorList>
    </citation>
    <scope>INTERACTION WITH ESCHERICHIA PHAGE T7 PROTEIN OCR (MICROBIAL INFECTION)</scope>
    <source>
        <strain>K12</strain>
    </source>
</reference>
<reference key="11">
    <citation type="journal article" date="2003" name="Nucleic Acids Res.">
        <title>A nomenclature for restriction enzymes, DNA methyltransferases, homing endonucleases and their genes.</title>
        <authorList>
            <person name="Roberts R.J."/>
            <person name="Belfort M."/>
            <person name="Bestor T."/>
            <person name="Bhagwat A.S."/>
            <person name="Bickle T.A."/>
            <person name="Bitinaite J."/>
            <person name="Blumenthal R.M."/>
            <person name="Degtyarev S.K."/>
            <person name="Dryden D.T."/>
            <person name="Dybvig K."/>
            <person name="Firman K."/>
            <person name="Gromova E.S."/>
            <person name="Gumport R.I."/>
            <person name="Halford S.E."/>
            <person name="Hattman S."/>
            <person name="Heitman J."/>
            <person name="Hornby D.P."/>
            <person name="Janulaitis A."/>
            <person name="Jeltsch A."/>
            <person name="Josephsen J."/>
            <person name="Kiss A."/>
            <person name="Klaenhammer T.R."/>
            <person name="Kobayashi I."/>
            <person name="Kong H."/>
            <person name="Krueger D.H."/>
            <person name="Lacks S."/>
            <person name="Marinus M.G."/>
            <person name="Miyahara M."/>
            <person name="Morgan R.D."/>
            <person name="Murray N.E."/>
            <person name="Nagaraja V."/>
            <person name="Piekarowicz A."/>
            <person name="Pingoud A."/>
            <person name="Raleigh E."/>
            <person name="Rao D.N."/>
            <person name="Reich N."/>
            <person name="Repin V.E."/>
            <person name="Selker E.U."/>
            <person name="Shaw P.C."/>
            <person name="Stein D.C."/>
            <person name="Stoddard B.L."/>
            <person name="Szybalski W."/>
            <person name="Trautner T.A."/>
            <person name="Van Etten J.L."/>
            <person name="Vitor J.M."/>
            <person name="Wilson G.G."/>
            <person name="Xu S.Y."/>
        </authorList>
    </citation>
    <scope>NOMENCLATURE</scope>
    <scope>SUBTYPE</scope>
</reference>
<reference evidence="12" key="12">
    <citation type="submission" date="2005-08" db="PDB data bank">
        <title>Crystal structure of Type I restriction enzyme EcoKI M protein (EC 2.1.1.72) (M.EcoKI).</title>
        <authorList>
            <person name="Rajashankar K.R."/>
            <person name="Kniewel R."/>
            <person name="Lima C.D."/>
        </authorList>
    </citation>
    <scope>X-RAY CRYSTALLOGRAPHY (2.80 ANGSTROMS) OF 2-527</scope>
</reference>
<reference evidence="13 14" key="13">
    <citation type="journal article" date="2009" name="Nucleic Acids Res.">
        <title>The structure of M.EcoKI Type I DNA methyltransferase with a DNA mimic antirestriction protein.</title>
        <authorList>
            <person name="Kennaway C.K."/>
            <person name="Obarska-Kosinska A."/>
            <person name="White J.H."/>
            <person name="Tuszynska I."/>
            <person name="Cooper L.P."/>
            <person name="Bujnicki J.M."/>
            <person name="Trinick J."/>
            <person name="Dryden D.T."/>
        </authorList>
    </citation>
    <scope>STRUCTURE BY ELECTRON MICROSCOPY (18.00 ANGSTROMS) IN COMPLEX WITH SPECIFICITY SUBUNIT AND ESCHERICHIA PHAGE T7 PROTEIN OCR</scope>
    <scope>INTERACTION WITH ESCHERICHIA PHAGE T7 PROTEIN OCR (MICROBIAL INFECTION)</scope>
</reference>
<gene>
    <name evidence="9" type="primary">hsdM</name>
    <name type="synonym">hsm</name>
    <name type="ordered locus">b4349</name>
    <name type="ordered locus">JW4312</name>
</gene>
<accession>P08957</accession>
<accession>Q2M5W7</accession>
<keyword id="KW-0002">3D-structure</keyword>
<keyword id="KW-0903">Direct protein sequencing</keyword>
<keyword id="KW-0238">DNA-binding</keyword>
<keyword id="KW-0945">Host-virus interaction</keyword>
<keyword id="KW-0489">Methyltransferase</keyword>
<keyword id="KW-1185">Reference proteome</keyword>
<keyword id="KW-0680">Restriction system</keyword>
<keyword id="KW-0949">S-adenosyl-L-methionine</keyword>
<keyword id="KW-0808">Transferase</keyword>
<proteinExistence type="evidence at protein level"/>
<organism>
    <name type="scientific">Escherichia coli (strain K12)</name>
    <dbReference type="NCBI Taxonomy" id="83333"/>
    <lineage>
        <taxon>Bacteria</taxon>
        <taxon>Pseudomonadati</taxon>
        <taxon>Pseudomonadota</taxon>
        <taxon>Gammaproteobacteria</taxon>
        <taxon>Enterobacterales</taxon>
        <taxon>Enterobacteriaceae</taxon>
        <taxon>Escherichia</taxon>
    </lineage>
</organism>